<dbReference type="EMBL" id="BX571872">
    <property type="protein sequence ID" value="CAE16416.1"/>
    <property type="molecule type" value="Genomic_DNA"/>
</dbReference>
<dbReference type="RefSeq" id="WP_011148173.1">
    <property type="nucleotide sequence ID" value="NC_005126.1"/>
</dbReference>
<dbReference type="SMR" id="Q7N053"/>
<dbReference type="STRING" id="243265.plu4044"/>
<dbReference type="GeneID" id="88807601"/>
<dbReference type="KEGG" id="plu:plu4044"/>
<dbReference type="eggNOG" id="COG1660">
    <property type="taxonomic scope" value="Bacteria"/>
</dbReference>
<dbReference type="HOGENOM" id="CLU_059558_1_1_6"/>
<dbReference type="OrthoDB" id="9784461at2"/>
<dbReference type="Proteomes" id="UP000002514">
    <property type="component" value="Chromosome"/>
</dbReference>
<dbReference type="GO" id="GO:0005524">
    <property type="term" value="F:ATP binding"/>
    <property type="evidence" value="ECO:0007669"/>
    <property type="project" value="UniProtKB-UniRule"/>
</dbReference>
<dbReference type="GO" id="GO:0005525">
    <property type="term" value="F:GTP binding"/>
    <property type="evidence" value="ECO:0007669"/>
    <property type="project" value="UniProtKB-UniRule"/>
</dbReference>
<dbReference type="GO" id="GO:0003723">
    <property type="term" value="F:RNA binding"/>
    <property type="evidence" value="ECO:0007669"/>
    <property type="project" value="UniProtKB-KW"/>
</dbReference>
<dbReference type="HAMAP" id="MF_00636">
    <property type="entry name" value="RapZ_like"/>
    <property type="match status" value="1"/>
</dbReference>
<dbReference type="InterPro" id="IPR027417">
    <property type="entry name" value="P-loop_NTPase"/>
</dbReference>
<dbReference type="InterPro" id="IPR005337">
    <property type="entry name" value="RapZ-like"/>
</dbReference>
<dbReference type="InterPro" id="IPR053930">
    <property type="entry name" value="RapZ-like_N"/>
</dbReference>
<dbReference type="InterPro" id="IPR053931">
    <property type="entry name" value="RapZ_C"/>
</dbReference>
<dbReference type="NCBIfam" id="NF003828">
    <property type="entry name" value="PRK05416.1"/>
    <property type="match status" value="1"/>
</dbReference>
<dbReference type="PANTHER" id="PTHR30448">
    <property type="entry name" value="RNASE ADAPTER PROTEIN RAPZ"/>
    <property type="match status" value="1"/>
</dbReference>
<dbReference type="PANTHER" id="PTHR30448:SF0">
    <property type="entry name" value="RNASE ADAPTER PROTEIN RAPZ"/>
    <property type="match status" value="1"/>
</dbReference>
<dbReference type="Pfam" id="PF22740">
    <property type="entry name" value="PapZ_C"/>
    <property type="match status" value="1"/>
</dbReference>
<dbReference type="Pfam" id="PF03668">
    <property type="entry name" value="RapZ-like_N"/>
    <property type="match status" value="1"/>
</dbReference>
<dbReference type="PIRSF" id="PIRSF005052">
    <property type="entry name" value="P-loopkin"/>
    <property type="match status" value="1"/>
</dbReference>
<dbReference type="SUPFAM" id="SSF52540">
    <property type="entry name" value="P-loop containing nucleoside triphosphate hydrolases"/>
    <property type="match status" value="1"/>
</dbReference>
<comment type="function">
    <text evidence="1">Modulates the synthesis of GlmS, by affecting the processing and stability of the regulatory small RNA GlmZ. When glucosamine-6-phosphate (GlcN6P) concentrations are high in the cell, RapZ binds GlmZ and targets it to cleavage by RNase E. Consequently, GlmZ is inactivated and unable to activate GlmS synthesis. Under low GlcN6P concentrations, RapZ is sequestered and inactivated by an other regulatory small RNA, GlmY, preventing GlmZ degradation and leading to synthesis of GlmS.</text>
</comment>
<comment type="subunit">
    <text evidence="1">Homotrimer.</text>
</comment>
<comment type="similarity">
    <text evidence="1">Belongs to the RapZ-like family. RapZ subfamily.</text>
</comment>
<proteinExistence type="inferred from homology"/>
<feature type="chain" id="PRO_0000107740" description="RNase adapter protein RapZ">
    <location>
        <begin position="1"/>
        <end position="283"/>
    </location>
</feature>
<feature type="region of interest" description="RNA-binding" evidence="1">
    <location>
        <begin position="266"/>
        <end position="283"/>
    </location>
</feature>
<feature type="binding site" evidence="1">
    <location>
        <begin position="8"/>
        <end position="15"/>
    </location>
    <ligand>
        <name>ATP</name>
        <dbReference type="ChEBI" id="CHEBI:30616"/>
    </ligand>
</feature>
<feature type="binding site" evidence="1">
    <location>
        <begin position="56"/>
        <end position="59"/>
    </location>
    <ligand>
        <name>GTP</name>
        <dbReference type="ChEBI" id="CHEBI:37565"/>
    </ligand>
</feature>
<keyword id="KW-0067">ATP-binding</keyword>
<keyword id="KW-0342">GTP-binding</keyword>
<keyword id="KW-0547">Nucleotide-binding</keyword>
<keyword id="KW-1185">Reference proteome</keyword>
<keyword id="KW-0694">RNA-binding</keyword>
<protein>
    <recommendedName>
        <fullName evidence="1">RNase adapter protein RapZ</fullName>
    </recommendedName>
</protein>
<organism>
    <name type="scientific">Photorhabdus laumondii subsp. laumondii (strain DSM 15139 / CIP 105565 / TT01)</name>
    <name type="common">Photorhabdus luminescens subsp. laumondii</name>
    <dbReference type="NCBI Taxonomy" id="243265"/>
    <lineage>
        <taxon>Bacteria</taxon>
        <taxon>Pseudomonadati</taxon>
        <taxon>Pseudomonadota</taxon>
        <taxon>Gammaproteobacteria</taxon>
        <taxon>Enterobacterales</taxon>
        <taxon>Morganellaceae</taxon>
        <taxon>Photorhabdus</taxon>
    </lineage>
</organism>
<name>RAPZ_PHOLL</name>
<gene>
    <name evidence="1" type="primary">rapZ</name>
    <name type="ordered locus">plu4044</name>
</gene>
<evidence type="ECO:0000255" key="1">
    <source>
        <dbReference type="HAMAP-Rule" id="MF_00636"/>
    </source>
</evidence>
<accession>Q7N053</accession>
<sequence length="283" mass="32364">MVLMIVSGRSGSGKSVALRALEDMGFYCVDNLPVVLLPELANTLADRDISAAVSIDVRNMPESPEVFEEALTKLPASFSPQLLFLDAERNTLIRRYSDTRRLHPLSSKNLSLESAIDQESDLLEPLRSRADLIIDTSEMSVHELAEMLRTRLLGKRERELTMVFESFGFKHGIPIDADYVFDVRFLPNPHWDPKLRPMTGLDRPVAAFLDRHTEVHNFIYQTRSYLELWLPMLETNNRSYLTVAIGCTGGKHRSVYVAEQLADYFRSRGKNVQSRHRTLEKRK</sequence>
<reference key="1">
    <citation type="journal article" date="2003" name="Nat. Biotechnol.">
        <title>The genome sequence of the entomopathogenic bacterium Photorhabdus luminescens.</title>
        <authorList>
            <person name="Duchaud E."/>
            <person name="Rusniok C."/>
            <person name="Frangeul L."/>
            <person name="Buchrieser C."/>
            <person name="Givaudan A."/>
            <person name="Taourit S."/>
            <person name="Bocs S."/>
            <person name="Boursaux-Eude C."/>
            <person name="Chandler M."/>
            <person name="Charles J.-F."/>
            <person name="Dassa E."/>
            <person name="Derose R."/>
            <person name="Derzelle S."/>
            <person name="Freyssinet G."/>
            <person name="Gaudriault S."/>
            <person name="Medigue C."/>
            <person name="Lanois A."/>
            <person name="Powell K."/>
            <person name="Siguier P."/>
            <person name="Vincent R."/>
            <person name="Wingate V."/>
            <person name="Zouine M."/>
            <person name="Glaser P."/>
            <person name="Boemare N."/>
            <person name="Danchin A."/>
            <person name="Kunst F."/>
        </authorList>
    </citation>
    <scope>NUCLEOTIDE SEQUENCE [LARGE SCALE GENOMIC DNA]</scope>
    <source>
        <strain>DSM 15139 / CIP 105565 / TT01</strain>
    </source>
</reference>